<evidence type="ECO:0000250" key="1"/>
<evidence type="ECO:0000255" key="2"/>
<evidence type="ECO:0000269" key="3">
    <source>
    </source>
</evidence>
<evidence type="ECO:0000305" key="4"/>
<comment type="interaction">
    <interactant intactId="EBI-20798208">
        <id>Q494W8</id>
    </interactant>
    <interactant intactId="EBI-79333">
        <id>P36544</id>
        <label>CHRNA7</label>
    </interactant>
    <organismsDiffer>false</organismsDiffer>
    <experiments>3</experiments>
</comment>
<comment type="subcellular location">
    <subcellularLocation>
        <location evidence="1">Membrane</location>
        <topology evidence="1">Multi-pass membrane protein</topology>
    </subcellularLocation>
</comment>
<comment type="tissue specificity">
    <text evidence="3">Expressed in hippocampus.</text>
</comment>
<comment type="similarity">
    <text evidence="4">Belongs to the ligand-gated ion channel (TC 1.A.9) family.</text>
</comment>
<comment type="caution">
    <text evidence="4">This protein is encoded by a hybrid gene consisting of a duplication of exons 5 through 10 of the CHRNA7 gene fused 3-prime to a copy of the FAM7A gene (exons A through E). The CHRFAM7A gene is in the opposite orientation to the CHRNA7 gene. It seems not to be represented on every human chromosome 15 and it is not clear whether the transcript is actually translated.</text>
</comment>
<name>CRFM7_HUMAN</name>
<keyword id="KW-0472">Membrane</keyword>
<keyword id="KW-1185">Reference proteome</keyword>
<keyword id="KW-0812">Transmembrane</keyword>
<keyword id="KW-1133">Transmembrane helix</keyword>
<accession>Q494W8</accession>
<accession>A8KAB9</accession>
<organism>
    <name type="scientific">Homo sapiens</name>
    <name type="common">Human</name>
    <dbReference type="NCBI Taxonomy" id="9606"/>
    <lineage>
        <taxon>Eukaryota</taxon>
        <taxon>Metazoa</taxon>
        <taxon>Chordata</taxon>
        <taxon>Craniata</taxon>
        <taxon>Vertebrata</taxon>
        <taxon>Euteleostomi</taxon>
        <taxon>Mammalia</taxon>
        <taxon>Eutheria</taxon>
        <taxon>Euarchontoglires</taxon>
        <taxon>Primates</taxon>
        <taxon>Haplorrhini</taxon>
        <taxon>Catarrhini</taxon>
        <taxon>Hominidae</taxon>
        <taxon>Homo</taxon>
    </lineage>
</organism>
<protein>
    <recommendedName>
        <fullName>CHRNA7-FAM7A fusion protein</fullName>
    </recommendedName>
    <alternativeName>
        <fullName>CHRNA7-DR1</fullName>
    </alternativeName>
    <alternativeName>
        <fullName>D-10</fullName>
    </alternativeName>
</protein>
<proteinExistence type="evidence at protein level"/>
<sequence>MQKYCIYQHFQFQLLIQHLWIAANCDIADERFDATFHTNVLVNSSGHCQYLPPGIFKSSCYIDVRWFPFDVQHCKLKFGSWSYGGWSLDLQMQEADISGYIPNGEWDLVGIPGKRSERFYECCKEPYPDVTFTVTMRRRTLYYGLNLLIPCVLISALALLVFLLPADSGEKISLGITVLLSLTVFMLLVAEIMPATSDSVPLIAQYFASTMIIVGLSVVVTVIVLQYHHHDPDGGKMPKWTRVILLNWCAWFLRMKRPGEDKVRPACQHKQRRCSLASVEMSAVAPPPASNGNLLYIGFRGLDGVHCVPTPDSGVVCGRMACSPTHDEHLLHGGQPPEGDPDLAKILEEVRYIANRFRCQDESEAVCSEWKFAACVVDRLCLMAFSVFTIICTIGILMSAPNFVEAVSKDFA</sequence>
<feature type="chain" id="PRO_0000232101" description="CHRNA7-FAM7A fusion protein">
    <location>
        <begin position="1"/>
        <end position="412"/>
    </location>
</feature>
<feature type="transmembrane region" description="Helical" evidence="2">
    <location>
        <begin position="144"/>
        <end position="164"/>
    </location>
</feature>
<feature type="transmembrane region" description="Helical" evidence="2">
    <location>
        <begin position="172"/>
        <end position="192"/>
    </location>
</feature>
<feature type="transmembrane region" description="Helical" evidence="2">
    <location>
        <begin position="205"/>
        <end position="225"/>
    </location>
</feature>
<feature type="transmembrane region" description="Helical" evidence="2">
    <location>
        <begin position="240"/>
        <end position="254"/>
    </location>
</feature>
<feature type="transmembrane region" description="Helical" evidence="2">
    <location>
        <begin position="380"/>
        <end position="400"/>
    </location>
</feature>
<dbReference type="EMBL" id="AK292984">
    <property type="protein sequence ID" value="BAF85673.1"/>
    <property type="molecule type" value="mRNA"/>
</dbReference>
<dbReference type="EMBL" id="BC101346">
    <property type="protein sequence ID" value="AAI01347.1"/>
    <property type="molecule type" value="mRNA"/>
</dbReference>
<dbReference type="EMBL" id="BC101347">
    <property type="protein sequence ID" value="AAI01348.1"/>
    <property type="molecule type" value="mRNA"/>
</dbReference>
<dbReference type="EMBL" id="BC101348">
    <property type="protein sequence ID" value="AAI01349.1"/>
    <property type="molecule type" value="mRNA"/>
</dbReference>
<dbReference type="EMBL" id="AC010799">
    <property type="status" value="NOT_ANNOTATED_CDS"/>
    <property type="molecule type" value="Genomic_DNA"/>
</dbReference>
<dbReference type="EMBL" id="AC019322">
    <property type="status" value="NOT_ANNOTATED_CDS"/>
    <property type="molecule type" value="Genomic_DNA"/>
</dbReference>
<dbReference type="EMBL" id="AF029838">
    <property type="status" value="NOT_ANNOTATED_CDS"/>
    <property type="molecule type" value="mRNA"/>
</dbReference>
<dbReference type="CCDS" id="CCDS32184.1"/>
<dbReference type="RefSeq" id="NP_647536.1">
    <property type="nucleotide sequence ID" value="NM_139320.2"/>
</dbReference>
<dbReference type="RefSeq" id="XP_011520455.1">
    <property type="nucleotide sequence ID" value="XM_011522153.3"/>
</dbReference>
<dbReference type="RefSeq" id="XP_054235080.1">
    <property type="nucleotide sequence ID" value="XM_054379105.1"/>
</dbReference>
<dbReference type="SMR" id="Q494W8"/>
<dbReference type="BioGRID" id="124609">
    <property type="interactions" value="2"/>
</dbReference>
<dbReference type="FunCoup" id="Q494W8">
    <property type="interactions" value="177"/>
</dbReference>
<dbReference type="IntAct" id="Q494W8">
    <property type="interactions" value="2"/>
</dbReference>
<dbReference type="MINT" id="Q494W8"/>
<dbReference type="STRING" id="9606.ENSP00000299847"/>
<dbReference type="DrugBank" id="DB07494">
    <property type="generic name" value="(3-EXO)-3-(10,11-DIHYDRO-5H-DIBENZO[A,D][7]ANNULEN-5-YLOXY)-8,8-DIMETHYL-8-AZONIABICYCLO[3.2.1]OCTANE"/>
</dbReference>
<dbReference type="DrugBank" id="DB07720">
    <property type="generic name" value="Epibatidine"/>
</dbReference>
<dbReference type="DrugBank" id="DB11421">
    <property type="generic name" value="Imidacloprid"/>
</dbReference>
<dbReference type="DrugBank" id="DB08620">
    <property type="generic name" value="Thiacloprid"/>
</dbReference>
<dbReference type="GlyGen" id="Q494W8">
    <property type="glycosylation" value="1 site, 1 O-linked glycan (1 site)"/>
</dbReference>
<dbReference type="BioMuta" id="CHRFAM7A"/>
<dbReference type="DMDM" id="91208254"/>
<dbReference type="MassIVE" id="Q494W8"/>
<dbReference type="PaxDb" id="9606-ENSP00000299847"/>
<dbReference type="PeptideAtlas" id="Q494W8"/>
<dbReference type="Antibodypedia" id="9365">
    <property type="antibodies" value="157 antibodies from 25 providers"/>
</dbReference>
<dbReference type="DNASU" id="89832"/>
<dbReference type="Ensembl" id="ENST00000299847.7">
    <property type="protein sequence ID" value="ENSP00000299847.3"/>
    <property type="gene ID" value="ENSG00000166664.15"/>
</dbReference>
<dbReference type="GeneID" id="89832"/>
<dbReference type="KEGG" id="hsa:89832"/>
<dbReference type="MANE-Select" id="ENST00000299847.7">
    <property type="protein sequence ID" value="ENSP00000299847.3"/>
    <property type="RefSeq nucleotide sequence ID" value="NM_139320.2"/>
    <property type="RefSeq protein sequence ID" value="NP_647536.1"/>
</dbReference>
<dbReference type="UCSC" id="uc001zdt.2">
    <property type="organism name" value="human"/>
</dbReference>
<dbReference type="AGR" id="HGNC:15781"/>
<dbReference type="CTD" id="89832"/>
<dbReference type="DisGeNET" id="89832"/>
<dbReference type="GeneCards" id="CHRFAM7A"/>
<dbReference type="HGNC" id="HGNC:15781">
    <property type="gene designation" value="CHRFAM7A"/>
</dbReference>
<dbReference type="HPA" id="ENSG00000166664">
    <property type="expression patterns" value="Tissue enhanced (bone marrow, parathyroid gland)"/>
</dbReference>
<dbReference type="MIM" id="609756">
    <property type="type" value="gene"/>
</dbReference>
<dbReference type="neXtProt" id="NX_Q494W8"/>
<dbReference type="OpenTargets" id="ENSG00000166664"/>
<dbReference type="PharmGKB" id="PA26483"/>
<dbReference type="VEuPathDB" id="HostDB:ENSG00000166664"/>
<dbReference type="eggNOG" id="KOG3646">
    <property type="taxonomic scope" value="Eukaryota"/>
</dbReference>
<dbReference type="GeneTree" id="ENSGT00940000154617"/>
<dbReference type="HOGENOM" id="CLU_018074_0_3_1"/>
<dbReference type="InParanoid" id="Q494W8"/>
<dbReference type="OMA" id="DRCCLIT"/>
<dbReference type="PAN-GO" id="Q494W8">
    <property type="GO annotations" value="12 GO annotations based on evolutionary models"/>
</dbReference>
<dbReference type="PhylomeDB" id="Q494W8"/>
<dbReference type="TreeFam" id="TF315605"/>
<dbReference type="PathwayCommons" id="Q494W8"/>
<dbReference type="SignaLink" id="Q494W8"/>
<dbReference type="BioGRID-ORCS" id="89832">
    <property type="hits" value="23 hits in 1038 CRISPR screens"/>
</dbReference>
<dbReference type="ChiTaRS" id="CHRFAM7A">
    <property type="organism name" value="human"/>
</dbReference>
<dbReference type="GenomeRNAi" id="89832"/>
<dbReference type="Pharos" id="Q494W8">
    <property type="development level" value="Tbio"/>
</dbReference>
<dbReference type="PRO" id="PR:Q494W8"/>
<dbReference type="Proteomes" id="UP000005640">
    <property type="component" value="Chromosome 15"/>
</dbReference>
<dbReference type="RNAct" id="Q494W8">
    <property type="molecule type" value="protein"/>
</dbReference>
<dbReference type="Bgee" id="ENSG00000166664">
    <property type="expression patterns" value="Expressed in primordial germ cell in gonad and 100 other cell types or tissues"/>
</dbReference>
<dbReference type="ExpressionAtlas" id="Q494W8">
    <property type="expression patterns" value="baseline and differential"/>
</dbReference>
<dbReference type="GO" id="GO:0005892">
    <property type="term" value="C:acetylcholine-gated channel complex"/>
    <property type="evidence" value="ECO:0000318"/>
    <property type="project" value="GO_Central"/>
</dbReference>
<dbReference type="GO" id="GO:0043005">
    <property type="term" value="C:neuron projection"/>
    <property type="evidence" value="ECO:0000318"/>
    <property type="project" value="GO_Central"/>
</dbReference>
<dbReference type="GO" id="GO:0005886">
    <property type="term" value="C:plasma membrane"/>
    <property type="evidence" value="ECO:0000318"/>
    <property type="project" value="GO_Central"/>
</dbReference>
<dbReference type="GO" id="GO:0098794">
    <property type="term" value="C:postsynapse"/>
    <property type="evidence" value="ECO:0007669"/>
    <property type="project" value="GOC"/>
</dbReference>
<dbReference type="GO" id="GO:0045202">
    <property type="term" value="C:synapse"/>
    <property type="evidence" value="ECO:0000318"/>
    <property type="project" value="GO_Central"/>
</dbReference>
<dbReference type="GO" id="GO:0022848">
    <property type="term" value="F:acetylcholine-gated monoatomic cation-selective channel activity"/>
    <property type="evidence" value="ECO:0000318"/>
    <property type="project" value="GO_Central"/>
</dbReference>
<dbReference type="GO" id="GO:0004888">
    <property type="term" value="F:transmembrane signaling receptor activity"/>
    <property type="evidence" value="ECO:0007669"/>
    <property type="project" value="InterPro"/>
</dbReference>
<dbReference type="GO" id="GO:0007268">
    <property type="term" value="P:chemical synaptic transmission"/>
    <property type="evidence" value="ECO:0000318"/>
    <property type="project" value="GO_Central"/>
</dbReference>
<dbReference type="GO" id="GO:0034220">
    <property type="term" value="P:monoatomic ion transmembrane transport"/>
    <property type="evidence" value="ECO:0000318"/>
    <property type="project" value="GO_Central"/>
</dbReference>
<dbReference type="GO" id="GO:0042391">
    <property type="term" value="P:regulation of membrane potential"/>
    <property type="evidence" value="ECO:0000318"/>
    <property type="project" value="GO_Central"/>
</dbReference>
<dbReference type="CDD" id="cd19051">
    <property type="entry name" value="LGIC_TM_cation"/>
    <property type="match status" value="1"/>
</dbReference>
<dbReference type="FunFam" id="1.20.58.390:FF:000007">
    <property type="entry name" value="Neuronal acetylcholine receptor subunit alpha-7"/>
    <property type="match status" value="1"/>
</dbReference>
<dbReference type="FunFam" id="1.20.58.390:FF:000011">
    <property type="entry name" value="neuronal acetylcholine receptor subunit alpha-7"/>
    <property type="match status" value="1"/>
</dbReference>
<dbReference type="FunFam" id="2.70.170.10:FF:000060">
    <property type="entry name" value="Nicotinic acetylcholine receptor subunit alpha4"/>
    <property type="match status" value="1"/>
</dbReference>
<dbReference type="Gene3D" id="2.70.170.10">
    <property type="entry name" value="Neurotransmitter-gated ion-channel ligand-binding domain"/>
    <property type="match status" value="1"/>
</dbReference>
<dbReference type="Gene3D" id="1.20.58.390">
    <property type="entry name" value="Neurotransmitter-gated ion-channel transmembrane domain"/>
    <property type="match status" value="2"/>
</dbReference>
<dbReference type="InterPro" id="IPR006202">
    <property type="entry name" value="Neur_chan_lig-bd"/>
</dbReference>
<dbReference type="InterPro" id="IPR036734">
    <property type="entry name" value="Neur_chan_lig-bd_sf"/>
</dbReference>
<dbReference type="InterPro" id="IPR006201">
    <property type="entry name" value="Neur_channel"/>
</dbReference>
<dbReference type="InterPro" id="IPR036719">
    <property type="entry name" value="Neuro-gated_channel_TM_sf"/>
</dbReference>
<dbReference type="InterPro" id="IPR038050">
    <property type="entry name" value="Neuro_actylchol_rec"/>
</dbReference>
<dbReference type="InterPro" id="IPR006029">
    <property type="entry name" value="Neurotrans-gated_channel_TM"/>
</dbReference>
<dbReference type="InterPro" id="IPR018000">
    <property type="entry name" value="Neurotransmitter_ion_chnl_CS"/>
</dbReference>
<dbReference type="NCBIfam" id="TIGR00860">
    <property type="entry name" value="LIC"/>
    <property type="match status" value="1"/>
</dbReference>
<dbReference type="PANTHER" id="PTHR18945">
    <property type="entry name" value="NEUROTRANSMITTER GATED ION CHANNEL"/>
    <property type="match status" value="1"/>
</dbReference>
<dbReference type="Pfam" id="PF02931">
    <property type="entry name" value="Neur_chan_LBD"/>
    <property type="match status" value="1"/>
</dbReference>
<dbReference type="Pfam" id="PF02932">
    <property type="entry name" value="Neur_chan_memb"/>
    <property type="match status" value="1"/>
</dbReference>
<dbReference type="SUPFAM" id="SSF90112">
    <property type="entry name" value="Neurotransmitter-gated ion-channel transmembrane pore"/>
    <property type="match status" value="1"/>
</dbReference>
<dbReference type="SUPFAM" id="SSF63712">
    <property type="entry name" value="Nicotinic receptor ligand binding domain-like"/>
    <property type="match status" value="1"/>
</dbReference>
<dbReference type="PROSITE" id="PS00236">
    <property type="entry name" value="NEUROTR_ION_CHANNEL"/>
    <property type="match status" value="1"/>
</dbReference>
<gene>
    <name type="primary">CHRFAM7A</name>
</gene>
<reference key="1">
    <citation type="journal article" date="2004" name="Nat. Genet.">
        <title>Complete sequencing and characterization of 21,243 full-length human cDNAs.</title>
        <authorList>
            <person name="Ota T."/>
            <person name="Suzuki Y."/>
            <person name="Nishikawa T."/>
            <person name="Otsuki T."/>
            <person name="Sugiyama T."/>
            <person name="Irie R."/>
            <person name="Wakamatsu A."/>
            <person name="Hayashi K."/>
            <person name="Sato H."/>
            <person name="Nagai K."/>
            <person name="Kimura K."/>
            <person name="Makita H."/>
            <person name="Sekine M."/>
            <person name="Obayashi M."/>
            <person name="Nishi T."/>
            <person name="Shibahara T."/>
            <person name="Tanaka T."/>
            <person name="Ishii S."/>
            <person name="Yamamoto J."/>
            <person name="Saito K."/>
            <person name="Kawai Y."/>
            <person name="Isono Y."/>
            <person name="Nakamura Y."/>
            <person name="Nagahari K."/>
            <person name="Murakami K."/>
            <person name="Yasuda T."/>
            <person name="Iwayanagi T."/>
            <person name="Wagatsuma M."/>
            <person name="Shiratori A."/>
            <person name="Sudo H."/>
            <person name="Hosoiri T."/>
            <person name="Kaku Y."/>
            <person name="Kodaira H."/>
            <person name="Kondo H."/>
            <person name="Sugawara M."/>
            <person name="Takahashi M."/>
            <person name="Kanda K."/>
            <person name="Yokoi T."/>
            <person name="Furuya T."/>
            <person name="Kikkawa E."/>
            <person name="Omura Y."/>
            <person name="Abe K."/>
            <person name="Kamihara K."/>
            <person name="Katsuta N."/>
            <person name="Sato K."/>
            <person name="Tanikawa M."/>
            <person name="Yamazaki M."/>
            <person name="Ninomiya K."/>
            <person name="Ishibashi T."/>
            <person name="Yamashita H."/>
            <person name="Murakawa K."/>
            <person name="Fujimori K."/>
            <person name="Tanai H."/>
            <person name="Kimata M."/>
            <person name="Watanabe M."/>
            <person name="Hiraoka S."/>
            <person name="Chiba Y."/>
            <person name="Ishida S."/>
            <person name="Ono Y."/>
            <person name="Takiguchi S."/>
            <person name="Watanabe S."/>
            <person name="Yosida M."/>
            <person name="Hotuta T."/>
            <person name="Kusano J."/>
            <person name="Kanehori K."/>
            <person name="Takahashi-Fujii A."/>
            <person name="Hara H."/>
            <person name="Tanase T.-O."/>
            <person name="Nomura Y."/>
            <person name="Togiya S."/>
            <person name="Komai F."/>
            <person name="Hara R."/>
            <person name="Takeuchi K."/>
            <person name="Arita M."/>
            <person name="Imose N."/>
            <person name="Musashino K."/>
            <person name="Yuuki H."/>
            <person name="Oshima A."/>
            <person name="Sasaki N."/>
            <person name="Aotsuka S."/>
            <person name="Yoshikawa Y."/>
            <person name="Matsunawa H."/>
            <person name="Ichihara T."/>
            <person name="Shiohata N."/>
            <person name="Sano S."/>
            <person name="Moriya S."/>
            <person name="Momiyama H."/>
            <person name="Satoh N."/>
            <person name="Takami S."/>
            <person name="Terashima Y."/>
            <person name="Suzuki O."/>
            <person name="Nakagawa S."/>
            <person name="Senoh A."/>
            <person name="Mizoguchi H."/>
            <person name="Goto Y."/>
            <person name="Shimizu F."/>
            <person name="Wakebe H."/>
            <person name="Hishigaki H."/>
            <person name="Watanabe T."/>
            <person name="Sugiyama A."/>
            <person name="Takemoto M."/>
            <person name="Kawakami B."/>
            <person name="Yamazaki M."/>
            <person name="Watanabe K."/>
            <person name="Kumagai A."/>
            <person name="Itakura S."/>
            <person name="Fukuzumi Y."/>
            <person name="Fujimori Y."/>
            <person name="Komiyama M."/>
            <person name="Tashiro H."/>
            <person name="Tanigami A."/>
            <person name="Fujiwara T."/>
            <person name="Ono T."/>
            <person name="Yamada K."/>
            <person name="Fujii Y."/>
            <person name="Ozaki K."/>
            <person name="Hirao M."/>
            <person name="Ohmori Y."/>
            <person name="Kawabata A."/>
            <person name="Hikiji T."/>
            <person name="Kobatake N."/>
            <person name="Inagaki H."/>
            <person name="Ikema Y."/>
            <person name="Okamoto S."/>
            <person name="Okitani R."/>
            <person name="Kawakami T."/>
            <person name="Noguchi S."/>
            <person name="Itoh T."/>
            <person name="Shigeta K."/>
            <person name="Senba T."/>
            <person name="Matsumura K."/>
            <person name="Nakajima Y."/>
            <person name="Mizuno T."/>
            <person name="Morinaga M."/>
            <person name="Sasaki M."/>
            <person name="Togashi T."/>
            <person name="Oyama M."/>
            <person name="Hata H."/>
            <person name="Watanabe M."/>
            <person name="Komatsu T."/>
            <person name="Mizushima-Sugano J."/>
            <person name="Satoh T."/>
            <person name="Shirai Y."/>
            <person name="Takahashi Y."/>
            <person name="Nakagawa K."/>
            <person name="Okumura K."/>
            <person name="Nagase T."/>
            <person name="Nomura N."/>
            <person name="Kikuchi H."/>
            <person name="Masuho Y."/>
            <person name="Yamashita R."/>
            <person name="Nakai K."/>
            <person name="Yada T."/>
            <person name="Nakamura Y."/>
            <person name="Ohara O."/>
            <person name="Isogai T."/>
            <person name="Sugano S."/>
        </authorList>
    </citation>
    <scope>NUCLEOTIDE SEQUENCE [LARGE SCALE MRNA]</scope>
    <source>
        <tissue>Trachea</tissue>
    </source>
</reference>
<reference key="2">
    <citation type="journal article" date="2006" name="Nature">
        <title>Analysis of the DNA sequence and duplication history of human chromosome 15.</title>
        <authorList>
            <person name="Zody M.C."/>
            <person name="Garber M."/>
            <person name="Sharpe T."/>
            <person name="Young S.K."/>
            <person name="Rowen L."/>
            <person name="O'Neill K."/>
            <person name="Whittaker C.A."/>
            <person name="Kamal M."/>
            <person name="Chang J.L."/>
            <person name="Cuomo C.A."/>
            <person name="Dewar K."/>
            <person name="FitzGerald M.G."/>
            <person name="Kodira C.D."/>
            <person name="Madan A."/>
            <person name="Qin S."/>
            <person name="Yang X."/>
            <person name="Abbasi N."/>
            <person name="Abouelleil A."/>
            <person name="Arachchi H.M."/>
            <person name="Baradarani L."/>
            <person name="Birditt B."/>
            <person name="Bloom S."/>
            <person name="Bloom T."/>
            <person name="Borowsky M.L."/>
            <person name="Burke J."/>
            <person name="Butler J."/>
            <person name="Cook A."/>
            <person name="DeArellano K."/>
            <person name="DeCaprio D."/>
            <person name="Dorris L. III"/>
            <person name="Dors M."/>
            <person name="Eichler E.E."/>
            <person name="Engels R."/>
            <person name="Fahey J."/>
            <person name="Fleetwood P."/>
            <person name="Friedman C."/>
            <person name="Gearin G."/>
            <person name="Hall J.L."/>
            <person name="Hensley G."/>
            <person name="Johnson E."/>
            <person name="Jones C."/>
            <person name="Kamat A."/>
            <person name="Kaur A."/>
            <person name="Locke D.P."/>
            <person name="Madan A."/>
            <person name="Munson G."/>
            <person name="Jaffe D.B."/>
            <person name="Lui A."/>
            <person name="Macdonald P."/>
            <person name="Mauceli E."/>
            <person name="Naylor J.W."/>
            <person name="Nesbitt R."/>
            <person name="Nicol R."/>
            <person name="O'Leary S.B."/>
            <person name="Ratcliffe A."/>
            <person name="Rounsley S."/>
            <person name="She X."/>
            <person name="Sneddon K.M.B."/>
            <person name="Stewart S."/>
            <person name="Sougnez C."/>
            <person name="Stone S.M."/>
            <person name="Topham K."/>
            <person name="Vincent D."/>
            <person name="Wang S."/>
            <person name="Zimmer A.R."/>
            <person name="Birren B.W."/>
            <person name="Hood L."/>
            <person name="Lander E.S."/>
            <person name="Nusbaum C."/>
        </authorList>
    </citation>
    <scope>NUCLEOTIDE SEQUENCE [LARGE SCALE GENOMIC DNA]</scope>
</reference>
<reference key="3">
    <citation type="journal article" date="2004" name="Genome Res.">
        <title>The status, quality, and expansion of the NIH full-length cDNA project: the Mammalian Gene Collection (MGC).</title>
        <authorList>
            <consortium name="The MGC Project Team"/>
        </authorList>
    </citation>
    <scope>NUCLEOTIDE SEQUENCE [LARGE SCALE MRNA]</scope>
</reference>
<reference key="4">
    <citation type="journal article" date="1998" name="Genomics">
        <title>Genomic organization and partial duplication of the human alpha7 neuronal nicotinic acetylcholine receptor gene (CHRNA7).</title>
        <authorList>
            <person name="Gault J."/>
            <person name="Robinson M."/>
            <person name="Berger R."/>
            <person name="Drebing C."/>
            <person name="Logel J."/>
            <person name="Hopkins J."/>
            <person name="Moore T."/>
            <person name="Jacobs S."/>
            <person name="Meriwether J."/>
            <person name="Choi M.J."/>
            <person name="Kim E.J."/>
            <person name="Walton K."/>
            <person name="Buiting K."/>
            <person name="Davis A."/>
            <person name="Breese C."/>
            <person name="Freedman R."/>
            <person name="Leonard S."/>
        </authorList>
    </citation>
    <scope>NUCLEOTIDE SEQUENCE [MRNA] OF 1-62</scope>
    <scope>TISSUE SPECIFICITY</scope>
    <source>
        <tissue>Hippocampus</tissue>
    </source>
</reference>